<evidence type="ECO:0000250" key="1">
    <source>
        <dbReference type="UniProtKB" id="Q32M45"/>
    </source>
</evidence>
<evidence type="ECO:0000250" key="2">
    <source>
        <dbReference type="UniProtKB" id="Q8C5H1"/>
    </source>
</evidence>
<evidence type="ECO:0000255" key="3"/>
<evidence type="ECO:0000256" key="4">
    <source>
        <dbReference type="SAM" id="MobiDB-lite"/>
    </source>
</evidence>
<evidence type="ECO:0000312" key="5">
    <source>
        <dbReference type="EMBL" id="AAI47938.1"/>
    </source>
</evidence>
<keyword id="KW-1003">Cell membrane</keyword>
<keyword id="KW-0325">Glycoprotein</keyword>
<keyword id="KW-0445">Lipid transport</keyword>
<keyword id="KW-0472">Membrane</keyword>
<keyword id="KW-1185">Reference proteome</keyword>
<keyword id="KW-0812">Transmembrane</keyword>
<keyword id="KW-1133">Transmembrane helix</keyword>
<keyword id="KW-0813">Transport</keyword>
<accession>A6QLE6</accession>
<comment type="function">
    <text evidence="2">Has calcium-dependent phospholipid scramblase activity; scrambles phosphatidylserine, phosphatidylcholine and galactosylceramide (By similarity). Does not exhibit calcium-activated chloride channel (CaCC) activity (By similarity).</text>
</comment>
<comment type="catalytic activity">
    <reaction evidence="2">
        <text>a 1,2-diacyl-sn-glycero-3-phospho-L-serine(in) = a 1,2-diacyl-sn-glycero-3-phospho-L-serine(out)</text>
        <dbReference type="Rhea" id="RHEA:38663"/>
        <dbReference type="ChEBI" id="CHEBI:57262"/>
    </reaction>
    <physiologicalReaction direction="left-to-right" evidence="2">
        <dbReference type="Rhea" id="RHEA:38664"/>
    </physiologicalReaction>
</comment>
<comment type="catalytic activity">
    <reaction evidence="2">
        <text>a beta-D-galactosyl-(1&lt;-&gt;1')-N-acylsphing-4-enine(out) = a beta-D-galactosyl-(1&lt;-&gt;1')-N-acylsphing-4-enine(in)</text>
        <dbReference type="Rhea" id="RHEA:38899"/>
        <dbReference type="ChEBI" id="CHEBI:18390"/>
    </reaction>
    <physiologicalReaction direction="left-to-right" evidence="2">
        <dbReference type="Rhea" id="RHEA:38900"/>
    </physiologicalReaction>
</comment>
<comment type="catalytic activity">
    <reaction evidence="2">
        <text>a 1,2-diacyl-sn-glycero-3-phosphocholine(in) = a 1,2-diacyl-sn-glycero-3-phosphocholine(out)</text>
        <dbReference type="Rhea" id="RHEA:38571"/>
        <dbReference type="ChEBI" id="CHEBI:57643"/>
    </reaction>
    <physiologicalReaction direction="right-to-left" evidence="2">
        <dbReference type="Rhea" id="RHEA:38573"/>
    </physiologicalReaction>
</comment>
<comment type="subcellular location">
    <subcellularLocation>
        <location evidence="1">Cell membrane</location>
        <topology evidence="1">Multi-pass membrane protein</topology>
    </subcellularLocation>
    <text evidence="2">Shows an intracellular localization.</text>
</comment>
<comment type="miscellaneous">
    <text>The term 'anoctamin' was coined because these channels are anion selective and have eight (OCT) transmembrane segments. There is some dissatisfaction in the field with the Ano nomenclature because it is not certain that all the members of this family are anion channels or have the 8-transmembrane topology.</text>
</comment>
<comment type="similarity">
    <text evidence="1">Belongs to the anoctamin family.</text>
</comment>
<dbReference type="EMBL" id="BC147937">
    <property type="protein sequence ID" value="AAI47938.1"/>
    <property type="molecule type" value="mRNA"/>
</dbReference>
<dbReference type="RefSeq" id="NP_001095520.1">
    <property type="nucleotide sequence ID" value="NM_001102050.1"/>
</dbReference>
<dbReference type="RefSeq" id="XP_005206653.1">
    <property type="nucleotide sequence ID" value="XM_005206596.3"/>
</dbReference>
<dbReference type="SMR" id="A6QLE6"/>
<dbReference type="FunCoup" id="A6QLE6">
    <property type="interactions" value="309"/>
</dbReference>
<dbReference type="STRING" id="9913.ENSBTAP00000063276"/>
<dbReference type="GlyCosmos" id="A6QLE6">
    <property type="glycosylation" value="3 sites, No reported glycans"/>
</dbReference>
<dbReference type="GlyGen" id="A6QLE6">
    <property type="glycosylation" value="3 sites"/>
</dbReference>
<dbReference type="PaxDb" id="9913-ENSBTAP00000005430"/>
<dbReference type="Ensembl" id="ENSBTAT00000005430.6">
    <property type="protein sequence ID" value="ENSBTAP00000005430.5"/>
    <property type="gene ID" value="ENSBTAG00000004145.7"/>
</dbReference>
<dbReference type="GeneID" id="518739"/>
<dbReference type="KEGG" id="bta:518739"/>
<dbReference type="CTD" id="121601"/>
<dbReference type="VEuPathDB" id="HostDB:ENSBTAG00000004145"/>
<dbReference type="VGNC" id="VGNC:25953">
    <property type="gene designation" value="ANO4"/>
</dbReference>
<dbReference type="eggNOG" id="KOG2514">
    <property type="taxonomic scope" value="Eukaryota"/>
</dbReference>
<dbReference type="GeneTree" id="ENSGT00940000158600"/>
<dbReference type="HOGENOM" id="CLU_006685_1_3_1"/>
<dbReference type="InParanoid" id="A6QLE6"/>
<dbReference type="OrthoDB" id="296386at2759"/>
<dbReference type="TreeFam" id="TF314265"/>
<dbReference type="Reactome" id="R-BTA-2672351">
    <property type="pathway name" value="Stimuli-sensing channels"/>
</dbReference>
<dbReference type="Proteomes" id="UP000009136">
    <property type="component" value="Chromosome 5"/>
</dbReference>
<dbReference type="Bgee" id="ENSBTAG00000004145">
    <property type="expression patterns" value="Expressed in granulosa cell and 58 other cell types or tissues"/>
</dbReference>
<dbReference type="GO" id="GO:0005886">
    <property type="term" value="C:plasma membrane"/>
    <property type="evidence" value="ECO:0000318"/>
    <property type="project" value="GO_Central"/>
</dbReference>
<dbReference type="GO" id="GO:0005229">
    <property type="term" value="F:intracellularly calcium-gated chloride channel activity"/>
    <property type="evidence" value="ECO:0000318"/>
    <property type="project" value="GO_Central"/>
</dbReference>
<dbReference type="GO" id="GO:0046983">
    <property type="term" value="F:protein dimerization activity"/>
    <property type="evidence" value="ECO:0007669"/>
    <property type="project" value="InterPro"/>
</dbReference>
<dbReference type="GO" id="GO:1902476">
    <property type="term" value="P:chloride transmembrane transport"/>
    <property type="evidence" value="ECO:0000318"/>
    <property type="project" value="GO_Central"/>
</dbReference>
<dbReference type="GO" id="GO:0006869">
    <property type="term" value="P:lipid transport"/>
    <property type="evidence" value="ECO:0007669"/>
    <property type="project" value="UniProtKB-KW"/>
</dbReference>
<dbReference type="InterPro" id="IPR032394">
    <property type="entry name" value="Anoct_dimer"/>
</dbReference>
<dbReference type="InterPro" id="IPR007632">
    <property type="entry name" value="Anoctamin"/>
</dbReference>
<dbReference type="InterPro" id="IPR049452">
    <property type="entry name" value="Anoctamin_TM"/>
</dbReference>
<dbReference type="PANTHER" id="PTHR12308">
    <property type="entry name" value="ANOCTAMIN"/>
    <property type="match status" value="1"/>
</dbReference>
<dbReference type="PANTHER" id="PTHR12308:SF28">
    <property type="entry name" value="ANOCTAMIN-4"/>
    <property type="match status" value="1"/>
</dbReference>
<dbReference type="Pfam" id="PF16178">
    <property type="entry name" value="Anoct_dimer"/>
    <property type="match status" value="1"/>
</dbReference>
<dbReference type="Pfam" id="PF04547">
    <property type="entry name" value="Anoctamin"/>
    <property type="match status" value="1"/>
</dbReference>
<reference evidence="5" key="1">
    <citation type="submission" date="2007-06" db="EMBL/GenBank/DDBJ databases">
        <authorList>
            <consortium name="NIH - Mammalian Gene Collection (MGC) project"/>
        </authorList>
    </citation>
    <scope>NUCLEOTIDE SEQUENCE [LARGE SCALE MRNA]</scope>
    <source>
        <strain evidence="5">Hereford</strain>
        <tissue evidence="5">Basal ganglia</tissue>
    </source>
</reference>
<gene>
    <name evidence="1" type="primary">ANO4</name>
    <name evidence="5" type="synonym">TMEM16D</name>
</gene>
<sequence>METSSSGITNGRTRVFHPVAKDVNILFDELEAVNSPCKDDDSLLHPGNLTSTSDDASRLEAGGETVPEKNKLNGLYFRDGKCRIDYILVYRKSNPQMEKREVFERNIRAEGLQMEKESSLINSDIIFVKLHAPWEVLGRYAEQMNVRMPFRRKIYYLPRRYKFMSRIDKQISRFRRWLPKKPMRLDKETLPDLEENDCYTAPFSQQRIHHFIIHNKDTFFNNATRSRIVHHILQRIKYEEGKNKIGLNRLLTNGSYEAAFPLHEGSYRSKNSIRTHGAVNHRHLLYECWASWGVWYKYQPLDLVRRYFGEKIGLYFAWLGWYTGMLFPAAFIGLFVFLYGVITLDHCQVSKEVCQATDIIMCPVCDKYCPFMRLSDSCVYAKVTHLFDNGATVFFAVFMAVWATVFLEFWKRRRAVIAYDWDLIDWEEEEEEIRPQFEAKYSKKERMNPISGKPEPYQAFADKCSRLIVSASGIFFMICVVIAAVFGIVIYRVVTVSTFAAFKWALIRNNSQVATTGTAVCINFCIIMLLNVLYEKVALLLTNLEQPRTESEWENSFTLKMFLFQFVNLNSSTFYIAFFLGRFTGHPGAYLRLINRWRLEECHPSGCLIDLCMQMGIIMVLKQTWNNFMELGYPLIQNWWTRRKVRQEHGPERKISFPQWEKDYNLQPMNAYGLFDEYLEMILQFGFTTIFVAAFPLAPLLALLNNIIEIRLDAYKFVTQWRRPLASRAKDIGIWYGILEGIGILSVITNAFVIAITSDFIPRLVYAYKYGPCAGQGEAGQKCMVGYVNASLSVFRISDFENRSEPESDGSEFSGTPLKYCRYRDYRDPPHSLVPYGYTLQFWHVLAARLAFIIVFEHLVFCIKHLISYLIPDLPKDLRDRMRREKYLIQEMMYEAELERLQKERKERKKNGKAHHNEWP</sequence>
<name>ANO4_BOVIN</name>
<protein>
    <recommendedName>
        <fullName evidence="1">Anoctamin-4</fullName>
    </recommendedName>
    <alternativeName>
        <fullName evidence="1">Transmembrane protein 16D</fullName>
    </alternativeName>
</protein>
<proteinExistence type="evidence at transcript level"/>
<organism>
    <name type="scientific">Bos taurus</name>
    <name type="common">Bovine</name>
    <dbReference type="NCBI Taxonomy" id="9913"/>
    <lineage>
        <taxon>Eukaryota</taxon>
        <taxon>Metazoa</taxon>
        <taxon>Chordata</taxon>
        <taxon>Craniata</taxon>
        <taxon>Vertebrata</taxon>
        <taxon>Euteleostomi</taxon>
        <taxon>Mammalia</taxon>
        <taxon>Eutheria</taxon>
        <taxon>Laurasiatheria</taxon>
        <taxon>Artiodactyla</taxon>
        <taxon>Ruminantia</taxon>
        <taxon>Pecora</taxon>
        <taxon>Bovidae</taxon>
        <taxon>Bovinae</taxon>
        <taxon>Bos</taxon>
    </lineage>
</organism>
<feature type="chain" id="PRO_0000353189" description="Anoctamin-4">
    <location>
        <begin position="1"/>
        <end position="920"/>
    </location>
</feature>
<feature type="topological domain" description="Cytoplasmic" evidence="3">
    <location>
        <begin position="1"/>
        <end position="323"/>
    </location>
</feature>
<feature type="transmembrane region" description="Helical" evidence="3">
    <location>
        <begin position="324"/>
        <end position="344"/>
    </location>
</feature>
<feature type="topological domain" description="Extracellular" evidence="3">
    <location>
        <begin position="345"/>
        <end position="389"/>
    </location>
</feature>
<feature type="transmembrane region" description="Helical" evidence="3">
    <location>
        <begin position="390"/>
        <end position="410"/>
    </location>
</feature>
<feature type="topological domain" description="Cytoplasmic" evidence="3">
    <location>
        <begin position="411"/>
        <end position="470"/>
    </location>
</feature>
<feature type="transmembrane region" description="Helical" evidence="3">
    <location>
        <begin position="471"/>
        <end position="491"/>
    </location>
</feature>
<feature type="topological domain" description="Extracellular" evidence="3">
    <location>
        <begin position="492"/>
        <end position="512"/>
    </location>
</feature>
<feature type="transmembrane region" description="Helical" evidence="3">
    <location>
        <begin position="513"/>
        <end position="533"/>
    </location>
</feature>
<feature type="topological domain" description="Cytoplasmic" evidence="3">
    <location>
        <begin position="534"/>
        <end position="560"/>
    </location>
</feature>
<feature type="transmembrane region" description="Helical" evidence="3">
    <location>
        <begin position="561"/>
        <end position="581"/>
    </location>
</feature>
<feature type="topological domain" description="Extracellular" evidence="3">
    <location>
        <begin position="582"/>
        <end position="680"/>
    </location>
</feature>
<feature type="transmembrane region" description="Helical" evidence="3">
    <location>
        <begin position="681"/>
        <end position="701"/>
    </location>
</feature>
<feature type="topological domain" description="Cytoplasmic" evidence="3">
    <location>
        <begin position="702"/>
        <end position="733"/>
    </location>
</feature>
<feature type="transmembrane region" description="Helical" evidence="3">
    <location>
        <begin position="734"/>
        <end position="754"/>
    </location>
</feature>
<feature type="topological domain" description="Extracellular" evidence="3">
    <location>
        <begin position="755"/>
        <end position="850"/>
    </location>
</feature>
<feature type="transmembrane region" description="Helical" evidence="3">
    <location>
        <begin position="851"/>
        <end position="871"/>
    </location>
</feature>
<feature type="topological domain" description="Cytoplasmic" evidence="3">
    <location>
        <begin position="872"/>
        <end position="920"/>
    </location>
</feature>
<feature type="region of interest" description="Disordered" evidence="4">
    <location>
        <begin position="38"/>
        <end position="64"/>
    </location>
</feature>
<feature type="glycosylation site" description="N-linked (GlcNAc...) asparagine" evidence="3">
    <location>
        <position position="509"/>
    </location>
</feature>
<feature type="glycosylation site" description="N-linked (GlcNAc...) asparagine" evidence="3">
    <location>
        <position position="789"/>
    </location>
</feature>
<feature type="glycosylation site" description="N-linked (GlcNAc...) asparagine" evidence="3">
    <location>
        <position position="802"/>
    </location>
</feature>